<protein>
    <recommendedName>
        <fullName evidence="1">Cytidylate kinase</fullName>
        <shortName evidence="1">CK</shortName>
        <ecNumber evidence="1">2.7.4.25</ecNumber>
    </recommendedName>
    <alternativeName>
        <fullName evidence="1">Cytidine monophosphate kinase</fullName>
        <shortName evidence="1">CMP kinase</shortName>
    </alternativeName>
</protein>
<keyword id="KW-0067">ATP-binding</keyword>
<keyword id="KW-0963">Cytoplasm</keyword>
<keyword id="KW-0418">Kinase</keyword>
<keyword id="KW-0547">Nucleotide-binding</keyword>
<keyword id="KW-0808">Transferase</keyword>
<comment type="catalytic activity">
    <reaction evidence="1">
        <text>CMP + ATP = CDP + ADP</text>
        <dbReference type="Rhea" id="RHEA:11600"/>
        <dbReference type="ChEBI" id="CHEBI:30616"/>
        <dbReference type="ChEBI" id="CHEBI:58069"/>
        <dbReference type="ChEBI" id="CHEBI:60377"/>
        <dbReference type="ChEBI" id="CHEBI:456216"/>
        <dbReference type="EC" id="2.7.4.25"/>
    </reaction>
</comment>
<comment type="catalytic activity">
    <reaction evidence="1">
        <text>dCMP + ATP = dCDP + ADP</text>
        <dbReference type="Rhea" id="RHEA:25094"/>
        <dbReference type="ChEBI" id="CHEBI:30616"/>
        <dbReference type="ChEBI" id="CHEBI:57566"/>
        <dbReference type="ChEBI" id="CHEBI:58593"/>
        <dbReference type="ChEBI" id="CHEBI:456216"/>
        <dbReference type="EC" id="2.7.4.25"/>
    </reaction>
</comment>
<comment type="subcellular location">
    <subcellularLocation>
        <location evidence="1">Cytoplasm</location>
    </subcellularLocation>
</comment>
<comment type="similarity">
    <text evidence="1">Belongs to the cytidylate kinase family. Type 1 subfamily.</text>
</comment>
<dbReference type="EC" id="2.7.4.25" evidence="1"/>
<dbReference type="EMBL" id="CP000359">
    <property type="protein sequence ID" value="ABF46514.1"/>
    <property type="molecule type" value="Genomic_DNA"/>
</dbReference>
<dbReference type="RefSeq" id="WP_011531335.1">
    <property type="nucleotide sequence ID" value="NC_008025.1"/>
</dbReference>
<dbReference type="SMR" id="Q1IW70"/>
<dbReference type="STRING" id="319795.Dgeo_2220"/>
<dbReference type="KEGG" id="dge:Dgeo_2220"/>
<dbReference type="eggNOG" id="COG0283">
    <property type="taxonomic scope" value="Bacteria"/>
</dbReference>
<dbReference type="HOGENOM" id="CLU_079959_0_0_0"/>
<dbReference type="Proteomes" id="UP000002431">
    <property type="component" value="Chromosome"/>
</dbReference>
<dbReference type="GO" id="GO:0005737">
    <property type="term" value="C:cytoplasm"/>
    <property type="evidence" value="ECO:0007669"/>
    <property type="project" value="UniProtKB-SubCell"/>
</dbReference>
<dbReference type="GO" id="GO:0005524">
    <property type="term" value="F:ATP binding"/>
    <property type="evidence" value="ECO:0007669"/>
    <property type="project" value="UniProtKB-UniRule"/>
</dbReference>
<dbReference type="GO" id="GO:0036430">
    <property type="term" value="F:CMP kinase activity"/>
    <property type="evidence" value="ECO:0007669"/>
    <property type="project" value="RHEA"/>
</dbReference>
<dbReference type="GO" id="GO:0036431">
    <property type="term" value="F:dCMP kinase activity"/>
    <property type="evidence" value="ECO:0007669"/>
    <property type="project" value="RHEA"/>
</dbReference>
<dbReference type="GO" id="GO:0006220">
    <property type="term" value="P:pyrimidine nucleotide metabolic process"/>
    <property type="evidence" value="ECO:0007669"/>
    <property type="project" value="UniProtKB-UniRule"/>
</dbReference>
<dbReference type="CDD" id="cd02020">
    <property type="entry name" value="CMPK"/>
    <property type="match status" value="1"/>
</dbReference>
<dbReference type="Gene3D" id="3.40.50.300">
    <property type="entry name" value="P-loop containing nucleotide triphosphate hydrolases"/>
    <property type="match status" value="1"/>
</dbReference>
<dbReference type="HAMAP" id="MF_00238">
    <property type="entry name" value="Cytidyl_kinase_type1"/>
    <property type="match status" value="1"/>
</dbReference>
<dbReference type="InterPro" id="IPR003136">
    <property type="entry name" value="Cytidylate_kin"/>
</dbReference>
<dbReference type="InterPro" id="IPR011994">
    <property type="entry name" value="Cytidylate_kinase_dom"/>
</dbReference>
<dbReference type="InterPro" id="IPR027417">
    <property type="entry name" value="P-loop_NTPase"/>
</dbReference>
<dbReference type="NCBIfam" id="TIGR00017">
    <property type="entry name" value="cmk"/>
    <property type="match status" value="1"/>
</dbReference>
<dbReference type="Pfam" id="PF02224">
    <property type="entry name" value="Cytidylate_kin"/>
    <property type="match status" value="1"/>
</dbReference>
<dbReference type="SUPFAM" id="SSF52540">
    <property type="entry name" value="P-loop containing nucleoside triphosphate hydrolases"/>
    <property type="match status" value="1"/>
</dbReference>
<gene>
    <name evidence="1" type="primary">cmk</name>
    <name type="ordered locus">Dgeo_2220</name>
</gene>
<organism>
    <name type="scientific">Deinococcus geothermalis (strain DSM 11300 / CIP 105573 / AG-3a)</name>
    <dbReference type="NCBI Taxonomy" id="319795"/>
    <lineage>
        <taxon>Bacteria</taxon>
        <taxon>Thermotogati</taxon>
        <taxon>Deinococcota</taxon>
        <taxon>Deinococci</taxon>
        <taxon>Deinococcales</taxon>
        <taxon>Deinococcaceae</taxon>
        <taxon>Deinococcus</taxon>
    </lineage>
</organism>
<evidence type="ECO:0000255" key="1">
    <source>
        <dbReference type="HAMAP-Rule" id="MF_00238"/>
    </source>
</evidence>
<feature type="chain" id="PRO_1000048214" description="Cytidylate kinase">
    <location>
        <begin position="1"/>
        <end position="209"/>
    </location>
</feature>
<feature type="binding site" evidence="1">
    <location>
        <begin position="7"/>
        <end position="15"/>
    </location>
    <ligand>
        <name>ATP</name>
        <dbReference type="ChEBI" id="CHEBI:30616"/>
    </ligand>
</feature>
<sequence length="209" mass="22285">MIVTIDGVAASGKSSVASGVARALGVPYVSSGLLYRAATLLALEADLPLDDPTTLLPQLHAHPLRLEALPEGNRVWAGERELTAELHSTRVDQGVSAVAALPEVRAWVDAQLRALPAPFVAEGRDMGTHVFPHADAKFYLTASPRVRAERRAQERPEDVPTIEAALIERDRRDRLQSAPAPDAHVIDTGPLALEDVIGVILAALPARSA</sequence>
<accession>Q1IW70</accession>
<proteinExistence type="inferred from homology"/>
<reference key="1">
    <citation type="submission" date="2006-04" db="EMBL/GenBank/DDBJ databases">
        <title>Complete sequence of chromosome of Deinococcus geothermalis DSM 11300.</title>
        <authorList>
            <person name="Copeland A."/>
            <person name="Lucas S."/>
            <person name="Lapidus A."/>
            <person name="Barry K."/>
            <person name="Detter J.C."/>
            <person name="Glavina del Rio T."/>
            <person name="Hammon N."/>
            <person name="Israni S."/>
            <person name="Dalin E."/>
            <person name="Tice H."/>
            <person name="Pitluck S."/>
            <person name="Brettin T."/>
            <person name="Bruce D."/>
            <person name="Han C."/>
            <person name="Tapia R."/>
            <person name="Saunders E."/>
            <person name="Gilna P."/>
            <person name="Schmutz J."/>
            <person name="Larimer F."/>
            <person name="Land M."/>
            <person name="Hauser L."/>
            <person name="Kyrpides N."/>
            <person name="Kim E."/>
            <person name="Daly M.J."/>
            <person name="Fredrickson J.K."/>
            <person name="Makarova K.S."/>
            <person name="Gaidamakova E.K."/>
            <person name="Zhai M."/>
            <person name="Richardson P."/>
        </authorList>
    </citation>
    <scope>NUCLEOTIDE SEQUENCE [LARGE SCALE GENOMIC DNA]</scope>
    <source>
        <strain>DSM 11300 / CIP 105573 / AG-3a</strain>
    </source>
</reference>
<name>KCY_DEIGD</name>